<name>PYRG_DINSH</name>
<accession>A8LIN6</accession>
<sequence>MARFVFITGGVVSSLGKGLASAALGALLQARGFSVRLRKLDPYLNVDPGTMSPFEHGEVFVTDDGAETDLDLGHYERFTGVAARRTDSVSSGRIYSNVLEKERRGDYLGKTIQVIPHVTNEIKDFISIGEDEVDFMLCEIGGTVGDIEGLPFFEAIRQFGQDKPRGQCIFMHLTLLPYIAASGELKTKPTQHSVKELRSIGIAPDVLVCRSEGPIPQKERDKLALFCNVRPESVIAAQDLKSIYEAPLAYHREGLDQAVLDAFSISPAPKPDLTVWHDVADRIHNPEGEVNVAIVGKYTQLEDAYKSIAEALTHGGMANRVKVKSEWIDAEIFEREDPVPHLEKFDAILVPGGFGERGTEGKIKAAQFAREHKIPYLGICLGMQMAVIESARHLTDLTDAGSEEFDHEAGKRRFTPVVYHLKEWVQGNHKVERKVDDDKGGTMRLGAYTAKLVEGSKVAQIYGSTTIEERHRHRYEVDIQYRDQLQAEGLIFSGMSPDGRLPEIVEVKDHPWFIGVQFHPELKSKPFAPHPLFADFVRAAKEVSRLV</sequence>
<proteinExistence type="inferred from homology"/>
<organism>
    <name type="scientific">Dinoroseobacter shibae (strain DSM 16493 / NCIMB 14021 / DFL 12)</name>
    <dbReference type="NCBI Taxonomy" id="398580"/>
    <lineage>
        <taxon>Bacteria</taxon>
        <taxon>Pseudomonadati</taxon>
        <taxon>Pseudomonadota</taxon>
        <taxon>Alphaproteobacteria</taxon>
        <taxon>Rhodobacterales</taxon>
        <taxon>Roseobacteraceae</taxon>
        <taxon>Dinoroseobacter</taxon>
    </lineage>
</organism>
<keyword id="KW-0067">ATP-binding</keyword>
<keyword id="KW-0315">Glutamine amidotransferase</keyword>
<keyword id="KW-0436">Ligase</keyword>
<keyword id="KW-0460">Magnesium</keyword>
<keyword id="KW-0479">Metal-binding</keyword>
<keyword id="KW-0547">Nucleotide-binding</keyword>
<keyword id="KW-0665">Pyrimidine biosynthesis</keyword>
<keyword id="KW-1185">Reference proteome</keyword>
<feature type="chain" id="PRO_1000139438" description="CTP synthase">
    <location>
        <begin position="1"/>
        <end position="547"/>
    </location>
</feature>
<feature type="domain" description="Glutamine amidotransferase type-1" evidence="1">
    <location>
        <begin position="291"/>
        <end position="546"/>
    </location>
</feature>
<feature type="region of interest" description="Amidoligase domain" evidence="1">
    <location>
        <begin position="1"/>
        <end position="265"/>
    </location>
</feature>
<feature type="active site" description="Nucleophile; for glutamine hydrolysis" evidence="1">
    <location>
        <position position="380"/>
    </location>
</feature>
<feature type="active site" evidence="1">
    <location>
        <position position="519"/>
    </location>
</feature>
<feature type="active site" evidence="1">
    <location>
        <position position="521"/>
    </location>
</feature>
<feature type="binding site" evidence="1">
    <location>
        <position position="13"/>
    </location>
    <ligand>
        <name>CTP</name>
        <dbReference type="ChEBI" id="CHEBI:37563"/>
        <note>allosteric inhibitor</note>
    </ligand>
</feature>
<feature type="binding site" evidence="1">
    <location>
        <position position="13"/>
    </location>
    <ligand>
        <name>UTP</name>
        <dbReference type="ChEBI" id="CHEBI:46398"/>
    </ligand>
</feature>
<feature type="binding site" evidence="1">
    <location>
        <begin position="14"/>
        <end position="19"/>
    </location>
    <ligand>
        <name>ATP</name>
        <dbReference type="ChEBI" id="CHEBI:30616"/>
    </ligand>
</feature>
<feature type="binding site" evidence="1">
    <location>
        <position position="71"/>
    </location>
    <ligand>
        <name>ATP</name>
        <dbReference type="ChEBI" id="CHEBI:30616"/>
    </ligand>
</feature>
<feature type="binding site" evidence="1">
    <location>
        <position position="71"/>
    </location>
    <ligand>
        <name>Mg(2+)</name>
        <dbReference type="ChEBI" id="CHEBI:18420"/>
    </ligand>
</feature>
<feature type="binding site" evidence="1">
    <location>
        <position position="139"/>
    </location>
    <ligand>
        <name>Mg(2+)</name>
        <dbReference type="ChEBI" id="CHEBI:18420"/>
    </ligand>
</feature>
<feature type="binding site" evidence="1">
    <location>
        <begin position="146"/>
        <end position="148"/>
    </location>
    <ligand>
        <name>CTP</name>
        <dbReference type="ChEBI" id="CHEBI:37563"/>
        <note>allosteric inhibitor</note>
    </ligand>
</feature>
<feature type="binding site" evidence="1">
    <location>
        <begin position="186"/>
        <end position="191"/>
    </location>
    <ligand>
        <name>CTP</name>
        <dbReference type="ChEBI" id="CHEBI:37563"/>
        <note>allosteric inhibitor</note>
    </ligand>
</feature>
<feature type="binding site" evidence="1">
    <location>
        <begin position="186"/>
        <end position="191"/>
    </location>
    <ligand>
        <name>UTP</name>
        <dbReference type="ChEBI" id="CHEBI:46398"/>
    </ligand>
</feature>
<feature type="binding site" evidence="1">
    <location>
        <position position="222"/>
    </location>
    <ligand>
        <name>CTP</name>
        <dbReference type="ChEBI" id="CHEBI:37563"/>
        <note>allosteric inhibitor</note>
    </ligand>
</feature>
<feature type="binding site" evidence="1">
    <location>
        <position position="222"/>
    </location>
    <ligand>
        <name>UTP</name>
        <dbReference type="ChEBI" id="CHEBI:46398"/>
    </ligand>
</feature>
<feature type="binding site" evidence="1">
    <location>
        <position position="353"/>
    </location>
    <ligand>
        <name>L-glutamine</name>
        <dbReference type="ChEBI" id="CHEBI:58359"/>
    </ligand>
</feature>
<feature type="binding site" evidence="1">
    <location>
        <begin position="381"/>
        <end position="384"/>
    </location>
    <ligand>
        <name>L-glutamine</name>
        <dbReference type="ChEBI" id="CHEBI:58359"/>
    </ligand>
</feature>
<feature type="binding site" evidence="1">
    <location>
        <position position="404"/>
    </location>
    <ligand>
        <name>L-glutamine</name>
        <dbReference type="ChEBI" id="CHEBI:58359"/>
    </ligand>
</feature>
<feature type="binding site" evidence="1">
    <location>
        <position position="474"/>
    </location>
    <ligand>
        <name>L-glutamine</name>
        <dbReference type="ChEBI" id="CHEBI:58359"/>
    </ligand>
</feature>
<comment type="function">
    <text evidence="1">Catalyzes the ATP-dependent amination of UTP to CTP with either L-glutamine or ammonia as the source of nitrogen. Regulates intracellular CTP levels through interactions with the four ribonucleotide triphosphates.</text>
</comment>
<comment type="catalytic activity">
    <reaction evidence="1">
        <text>UTP + L-glutamine + ATP + H2O = CTP + L-glutamate + ADP + phosphate + 2 H(+)</text>
        <dbReference type="Rhea" id="RHEA:26426"/>
        <dbReference type="ChEBI" id="CHEBI:15377"/>
        <dbReference type="ChEBI" id="CHEBI:15378"/>
        <dbReference type="ChEBI" id="CHEBI:29985"/>
        <dbReference type="ChEBI" id="CHEBI:30616"/>
        <dbReference type="ChEBI" id="CHEBI:37563"/>
        <dbReference type="ChEBI" id="CHEBI:43474"/>
        <dbReference type="ChEBI" id="CHEBI:46398"/>
        <dbReference type="ChEBI" id="CHEBI:58359"/>
        <dbReference type="ChEBI" id="CHEBI:456216"/>
        <dbReference type="EC" id="6.3.4.2"/>
    </reaction>
</comment>
<comment type="catalytic activity">
    <reaction evidence="1">
        <text>L-glutamine + H2O = L-glutamate + NH4(+)</text>
        <dbReference type="Rhea" id="RHEA:15889"/>
        <dbReference type="ChEBI" id="CHEBI:15377"/>
        <dbReference type="ChEBI" id="CHEBI:28938"/>
        <dbReference type="ChEBI" id="CHEBI:29985"/>
        <dbReference type="ChEBI" id="CHEBI:58359"/>
    </reaction>
</comment>
<comment type="catalytic activity">
    <reaction evidence="1">
        <text>UTP + NH4(+) + ATP = CTP + ADP + phosphate + 2 H(+)</text>
        <dbReference type="Rhea" id="RHEA:16597"/>
        <dbReference type="ChEBI" id="CHEBI:15378"/>
        <dbReference type="ChEBI" id="CHEBI:28938"/>
        <dbReference type="ChEBI" id="CHEBI:30616"/>
        <dbReference type="ChEBI" id="CHEBI:37563"/>
        <dbReference type="ChEBI" id="CHEBI:43474"/>
        <dbReference type="ChEBI" id="CHEBI:46398"/>
        <dbReference type="ChEBI" id="CHEBI:456216"/>
    </reaction>
</comment>
<comment type="activity regulation">
    <text evidence="1">Allosterically activated by GTP, when glutamine is the substrate; GTP has no effect on the reaction when ammonia is the substrate. The allosteric effector GTP functions by stabilizing the protein conformation that binds the tetrahedral intermediate(s) formed during glutamine hydrolysis. Inhibited by the product CTP, via allosteric rather than competitive inhibition.</text>
</comment>
<comment type="pathway">
    <text evidence="1">Pyrimidine metabolism; CTP biosynthesis via de novo pathway; CTP from UDP: step 2/2.</text>
</comment>
<comment type="subunit">
    <text evidence="1">Homotetramer.</text>
</comment>
<comment type="miscellaneous">
    <text evidence="1">CTPSs have evolved a hybrid strategy for distinguishing between UTP and CTP. The overlapping regions of the product feedback inhibitory and substrate sites recognize a common feature in both compounds, the triphosphate moiety. To differentiate isosteric substrate and product pyrimidine rings, an additional pocket far from the expected kinase/ligase catalytic site, specifically recognizes the cytosine and ribose portions of the product inhibitor.</text>
</comment>
<comment type="similarity">
    <text evidence="1">Belongs to the CTP synthase family.</text>
</comment>
<dbReference type="EC" id="6.3.4.2" evidence="1"/>
<dbReference type="EMBL" id="CP000830">
    <property type="protein sequence ID" value="ABV94477.1"/>
    <property type="molecule type" value="Genomic_DNA"/>
</dbReference>
<dbReference type="RefSeq" id="WP_012179405.1">
    <property type="nucleotide sequence ID" value="NC_009952.1"/>
</dbReference>
<dbReference type="SMR" id="A8LIN6"/>
<dbReference type="STRING" id="398580.Dshi_2744"/>
<dbReference type="MEROPS" id="C26.964"/>
<dbReference type="KEGG" id="dsh:Dshi_2744"/>
<dbReference type="eggNOG" id="COG0504">
    <property type="taxonomic scope" value="Bacteria"/>
</dbReference>
<dbReference type="HOGENOM" id="CLU_011675_5_0_5"/>
<dbReference type="OrthoDB" id="9801107at2"/>
<dbReference type="UniPathway" id="UPA00159">
    <property type="reaction ID" value="UER00277"/>
</dbReference>
<dbReference type="Proteomes" id="UP000006833">
    <property type="component" value="Chromosome"/>
</dbReference>
<dbReference type="GO" id="GO:0005829">
    <property type="term" value="C:cytosol"/>
    <property type="evidence" value="ECO:0007669"/>
    <property type="project" value="TreeGrafter"/>
</dbReference>
<dbReference type="GO" id="GO:0005524">
    <property type="term" value="F:ATP binding"/>
    <property type="evidence" value="ECO:0007669"/>
    <property type="project" value="UniProtKB-KW"/>
</dbReference>
<dbReference type="GO" id="GO:0003883">
    <property type="term" value="F:CTP synthase activity"/>
    <property type="evidence" value="ECO:0007669"/>
    <property type="project" value="UniProtKB-UniRule"/>
</dbReference>
<dbReference type="GO" id="GO:0004359">
    <property type="term" value="F:glutaminase activity"/>
    <property type="evidence" value="ECO:0007669"/>
    <property type="project" value="RHEA"/>
</dbReference>
<dbReference type="GO" id="GO:0042802">
    <property type="term" value="F:identical protein binding"/>
    <property type="evidence" value="ECO:0007669"/>
    <property type="project" value="TreeGrafter"/>
</dbReference>
<dbReference type="GO" id="GO:0046872">
    <property type="term" value="F:metal ion binding"/>
    <property type="evidence" value="ECO:0007669"/>
    <property type="project" value="UniProtKB-KW"/>
</dbReference>
<dbReference type="GO" id="GO:0044210">
    <property type="term" value="P:'de novo' CTP biosynthetic process"/>
    <property type="evidence" value="ECO:0007669"/>
    <property type="project" value="UniProtKB-UniRule"/>
</dbReference>
<dbReference type="GO" id="GO:0019856">
    <property type="term" value="P:pyrimidine nucleobase biosynthetic process"/>
    <property type="evidence" value="ECO:0007669"/>
    <property type="project" value="TreeGrafter"/>
</dbReference>
<dbReference type="CDD" id="cd03113">
    <property type="entry name" value="CTPS_N"/>
    <property type="match status" value="1"/>
</dbReference>
<dbReference type="CDD" id="cd01746">
    <property type="entry name" value="GATase1_CTP_Synthase"/>
    <property type="match status" value="1"/>
</dbReference>
<dbReference type="FunFam" id="3.40.50.300:FF:000009">
    <property type="entry name" value="CTP synthase"/>
    <property type="match status" value="1"/>
</dbReference>
<dbReference type="FunFam" id="3.40.50.880:FF:000002">
    <property type="entry name" value="CTP synthase"/>
    <property type="match status" value="1"/>
</dbReference>
<dbReference type="Gene3D" id="3.40.50.880">
    <property type="match status" value="1"/>
</dbReference>
<dbReference type="Gene3D" id="3.40.50.300">
    <property type="entry name" value="P-loop containing nucleotide triphosphate hydrolases"/>
    <property type="match status" value="1"/>
</dbReference>
<dbReference type="HAMAP" id="MF_01227">
    <property type="entry name" value="PyrG"/>
    <property type="match status" value="1"/>
</dbReference>
<dbReference type="InterPro" id="IPR029062">
    <property type="entry name" value="Class_I_gatase-like"/>
</dbReference>
<dbReference type="InterPro" id="IPR004468">
    <property type="entry name" value="CTP_synthase"/>
</dbReference>
<dbReference type="InterPro" id="IPR017456">
    <property type="entry name" value="CTP_synthase_N"/>
</dbReference>
<dbReference type="InterPro" id="IPR017926">
    <property type="entry name" value="GATASE"/>
</dbReference>
<dbReference type="InterPro" id="IPR033828">
    <property type="entry name" value="GATase1_CTP_Synthase"/>
</dbReference>
<dbReference type="InterPro" id="IPR027417">
    <property type="entry name" value="P-loop_NTPase"/>
</dbReference>
<dbReference type="NCBIfam" id="NF003792">
    <property type="entry name" value="PRK05380.1"/>
    <property type="match status" value="1"/>
</dbReference>
<dbReference type="NCBIfam" id="TIGR00337">
    <property type="entry name" value="PyrG"/>
    <property type="match status" value="1"/>
</dbReference>
<dbReference type="PANTHER" id="PTHR11550">
    <property type="entry name" value="CTP SYNTHASE"/>
    <property type="match status" value="1"/>
</dbReference>
<dbReference type="PANTHER" id="PTHR11550:SF0">
    <property type="entry name" value="CTP SYNTHASE-RELATED"/>
    <property type="match status" value="1"/>
</dbReference>
<dbReference type="Pfam" id="PF06418">
    <property type="entry name" value="CTP_synth_N"/>
    <property type="match status" value="1"/>
</dbReference>
<dbReference type="Pfam" id="PF00117">
    <property type="entry name" value="GATase"/>
    <property type="match status" value="1"/>
</dbReference>
<dbReference type="SUPFAM" id="SSF52317">
    <property type="entry name" value="Class I glutamine amidotransferase-like"/>
    <property type="match status" value="1"/>
</dbReference>
<dbReference type="SUPFAM" id="SSF52540">
    <property type="entry name" value="P-loop containing nucleoside triphosphate hydrolases"/>
    <property type="match status" value="1"/>
</dbReference>
<dbReference type="PROSITE" id="PS51273">
    <property type="entry name" value="GATASE_TYPE_1"/>
    <property type="match status" value="1"/>
</dbReference>
<reference key="1">
    <citation type="journal article" date="2010" name="ISME J.">
        <title>The complete genome sequence of the algal symbiont Dinoroseobacter shibae: a hitchhiker's guide to life in the sea.</title>
        <authorList>
            <person name="Wagner-Dobler I."/>
            <person name="Ballhausen B."/>
            <person name="Berger M."/>
            <person name="Brinkhoff T."/>
            <person name="Buchholz I."/>
            <person name="Bunk B."/>
            <person name="Cypionka H."/>
            <person name="Daniel R."/>
            <person name="Drepper T."/>
            <person name="Gerdts G."/>
            <person name="Hahnke S."/>
            <person name="Han C."/>
            <person name="Jahn D."/>
            <person name="Kalhoefer D."/>
            <person name="Kiss H."/>
            <person name="Klenk H.P."/>
            <person name="Kyrpides N."/>
            <person name="Liebl W."/>
            <person name="Liesegang H."/>
            <person name="Meincke L."/>
            <person name="Pati A."/>
            <person name="Petersen J."/>
            <person name="Piekarski T."/>
            <person name="Pommerenke C."/>
            <person name="Pradella S."/>
            <person name="Pukall R."/>
            <person name="Rabus R."/>
            <person name="Stackebrandt E."/>
            <person name="Thole S."/>
            <person name="Thompson L."/>
            <person name="Tielen P."/>
            <person name="Tomasch J."/>
            <person name="von Jan M."/>
            <person name="Wanphrut N."/>
            <person name="Wichels A."/>
            <person name="Zech H."/>
            <person name="Simon M."/>
        </authorList>
    </citation>
    <scope>NUCLEOTIDE SEQUENCE [LARGE SCALE GENOMIC DNA]</scope>
    <source>
        <strain>DSM 16493 / NCIMB 14021 / DFL 12</strain>
    </source>
</reference>
<evidence type="ECO:0000255" key="1">
    <source>
        <dbReference type="HAMAP-Rule" id="MF_01227"/>
    </source>
</evidence>
<protein>
    <recommendedName>
        <fullName evidence="1">CTP synthase</fullName>
        <ecNumber evidence="1">6.3.4.2</ecNumber>
    </recommendedName>
    <alternativeName>
        <fullName evidence="1">Cytidine 5'-triphosphate synthase</fullName>
    </alternativeName>
    <alternativeName>
        <fullName evidence="1">Cytidine triphosphate synthetase</fullName>
        <shortName evidence="1">CTP synthetase</shortName>
        <shortName evidence="1">CTPS</shortName>
    </alternativeName>
    <alternativeName>
        <fullName evidence="1">UTP--ammonia ligase</fullName>
    </alternativeName>
</protein>
<gene>
    <name evidence="1" type="primary">pyrG</name>
    <name type="ordered locus">Dshi_2744</name>
</gene>